<dbReference type="EC" id="2.5.-.-" evidence="1"/>
<dbReference type="EMBL" id="CP001037">
    <property type="protein sequence ID" value="ACC80179.1"/>
    <property type="molecule type" value="Genomic_DNA"/>
</dbReference>
<dbReference type="RefSeq" id="WP_012408197.1">
    <property type="nucleotide sequence ID" value="NC_010628.1"/>
</dbReference>
<dbReference type="SMR" id="B2IZP9"/>
<dbReference type="STRING" id="63737.Npun_F1484"/>
<dbReference type="EnsemblBacteria" id="ACC80179">
    <property type="protein sequence ID" value="ACC80179"/>
    <property type="gene ID" value="Npun_F1484"/>
</dbReference>
<dbReference type="KEGG" id="npu:Npun_F1484"/>
<dbReference type="eggNOG" id="COG1899">
    <property type="taxonomic scope" value="Bacteria"/>
</dbReference>
<dbReference type="HOGENOM" id="CLU_039781_1_0_3"/>
<dbReference type="OrthoDB" id="9771211at2"/>
<dbReference type="PhylomeDB" id="B2IZP9"/>
<dbReference type="Proteomes" id="UP000001191">
    <property type="component" value="Chromosome"/>
</dbReference>
<dbReference type="GO" id="GO:0005737">
    <property type="term" value="C:cytoplasm"/>
    <property type="evidence" value="ECO:0007669"/>
    <property type="project" value="TreeGrafter"/>
</dbReference>
<dbReference type="GO" id="GO:0034038">
    <property type="term" value="F:deoxyhypusine synthase activity"/>
    <property type="evidence" value="ECO:0007669"/>
    <property type="project" value="TreeGrafter"/>
</dbReference>
<dbReference type="Gene3D" id="3.40.910.10">
    <property type="entry name" value="Deoxyhypusine synthase"/>
    <property type="match status" value="1"/>
</dbReference>
<dbReference type="HAMAP" id="MF_00640">
    <property type="entry name" value="DHS_like"/>
    <property type="match status" value="1"/>
</dbReference>
<dbReference type="InterPro" id="IPR002773">
    <property type="entry name" value="Deoxyhypusine_synthase"/>
</dbReference>
<dbReference type="InterPro" id="IPR023496">
    <property type="entry name" value="Deoxyhypusine_synthase-like"/>
</dbReference>
<dbReference type="InterPro" id="IPR036982">
    <property type="entry name" value="Deoxyhypusine_synthase_sf"/>
</dbReference>
<dbReference type="InterPro" id="IPR029035">
    <property type="entry name" value="DHS-like_NAD/FAD-binding_dom"/>
</dbReference>
<dbReference type="NCBIfam" id="NF001980">
    <property type="entry name" value="PRK00770.1"/>
    <property type="match status" value="1"/>
</dbReference>
<dbReference type="PANTHER" id="PTHR11703">
    <property type="entry name" value="DEOXYHYPUSINE SYNTHASE"/>
    <property type="match status" value="1"/>
</dbReference>
<dbReference type="PANTHER" id="PTHR11703:SF2">
    <property type="entry name" value="DEOXYHYPUSINE SYNTHASE-LIKE PROTEIN"/>
    <property type="match status" value="1"/>
</dbReference>
<dbReference type="Pfam" id="PF01916">
    <property type="entry name" value="DS"/>
    <property type="match status" value="1"/>
</dbReference>
<dbReference type="SUPFAM" id="SSF52467">
    <property type="entry name" value="DHS-like NAD/FAD-binding domain"/>
    <property type="match status" value="1"/>
</dbReference>
<evidence type="ECO:0000255" key="1">
    <source>
        <dbReference type="HAMAP-Rule" id="MF_00640"/>
    </source>
</evidence>
<sequence>MSKQLGQKIAPTPISNDINVVDLIDQYFTAYNSARLREICQLLSRDVLTEGVTVGVSLSGAMTPAGFGVSALAPLIRNGFIDWMISTGANLYHDMHYGLGFELFAGNPFLDDVKLRQEGTIRIYDIIFGYDVLLETDAFIRKILQGEAFQKRMGTAEFHYLLGKYVREVEKQLGVQHSCLLATAYEYGVPIYTSSPGDSSIGMNVAALALEGSQLVLDPSIDVNETAAIAYNARESGGKSAAVILGGGSPKNFLLQTQPQLHEVLGLEERGHDYFVQFTDARPDTGGLSGATPSEAVSWGKIDPEELPNTIVCYTDSTIALPLVTAYVLNKCQPRPLKRIYDKREAILDKLQKDYLAAKTQPSDQVPAAVAESAQKQTATYPCGRLIPNT</sequence>
<organism>
    <name type="scientific">Nostoc punctiforme (strain ATCC 29133 / PCC 73102)</name>
    <dbReference type="NCBI Taxonomy" id="63737"/>
    <lineage>
        <taxon>Bacteria</taxon>
        <taxon>Bacillati</taxon>
        <taxon>Cyanobacteriota</taxon>
        <taxon>Cyanophyceae</taxon>
        <taxon>Nostocales</taxon>
        <taxon>Nostocaceae</taxon>
        <taxon>Nostoc</taxon>
    </lineage>
</organism>
<feature type="chain" id="PRO_1000130885" description="Deoxyhypusine synthase-like protein">
    <location>
        <begin position="1"/>
        <end position="390"/>
    </location>
</feature>
<keyword id="KW-1185">Reference proteome</keyword>
<keyword id="KW-0808">Transferase</keyword>
<accession>B2IZP9</accession>
<proteinExistence type="inferred from homology"/>
<gene>
    <name type="ordered locus">Npun_F1484</name>
</gene>
<reference key="1">
    <citation type="journal article" date="2013" name="Plant Physiol.">
        <title>A Nostoc punctiforme Sugar Transporter Necessary to Establish a Cyanobacterium-Plant Symbiosis.</title>
        <authorList>
            <person name="Ekman M."/>
            <person name="Picossi S."/>
            <person name="Campbell E.L."/>
            <person name="Meeks J.C."/>
            <person name="Flores E."/>
        </authorList>
    </citation>
    <scope>NUCLEOTIDE SEQUENCE [LARGE SCALE GENOMIC DNA]</scope>
    <source>
        <strain>ATCC 29133 / PCC 73102</strain>
    </source>
</reference>
<protein>
    <recommendedName>
        <fullName evidence="1">Deoxyhypusine synthase-like protein</fullName>
        <ecNumber evidence="1">2.5.-.-</ecNumber>
    </recommendedName>
</protein>
<name>DHSL_NOSP7</name>
<comment type="similarity">
    <text evidence="1">Belongs to the deoxyhypusine synthase family.</text>
</comment>